<reference key="1">
    <citation type="journal article" date="1996" name="Biochem. Mol. Biol. Int.">
        <title>Organization and nucleotide sequences of ten ribosomal protein genes from the region equivalent to the S10 operon in the archaebacterium, Halobacterium halobium.</title>
        <authorList>
            <person name="Miyokawa T."/>
            <person name="Urayama T."/>
            <person name="Shimooka K."/>
            <person name="Itoh T."/>
        </authorList>
    </citation>
    <scope>NUCLEOTIDE SEQUENCE [GENOMIC DNA]</scope>
</reference>
<reference key="2">
    <citation type="journal article" date="2000" name="Proc. Natl. Acad. Sci. U.S.A.">
        <title>Genome sequence of Halobacterium species NRC-1.</title>
        <authorList>
            <person name="Ng W.V."/>
            <person name="Kennedy S.P."/>
            <person name="Mahairas G.G."/>
            <person name="Berquist B."/>
            <person name="Pan M."/>
            <person name="Shukla H.D."/>
            <person name="Lasky S.R."/>
            <person name="Baliga N.S."/>
            <person name="Thorsson V."/>
            <person name="Sbrogna J."/>
            <person name="Swartzell S."/>
            <person name="Weir D."/>
            <person name="Hall J."/>
            <person name="Dahl T.A."/>
            <person name="Welti R."/>
            <person name="Goo Y.A."/>
            <person name="Leithauser B."/>
            <person name="Keller K."/>
            <person name="Cruz R."/>
            <person name="Danson M.J."/>
            <person name="Hough D.W."/>
            <person name="Maddocks D.G."/>
            <person name="Jablonski P.E."/>
            <person name="Krebs M.P."/>
            <person name="Angevine C.M."/>
            <person name="Dale H."/>
            <person name="Isenbarger T.A."/>
            <person name="Peck R.F."/>
            <person name="Pohlschroder M."/>
            <person name="Spudich J.L."/>
            <person name="Jung K.-H."/>
            <person name="Alam M."/>
            <person name="Freitas T."/>
            <person name="Hou S."/>
            <person name="Daniels C.J."/>
            <person name="Dennis P.P."/>
            <person name="Omer A.D."/>
            <person name="Ebhardt H."/>
            <person name="Lowe T.M."/>
            <person name="Liang P."/>
            <person name="Riley M."/>
            <person name="Hood L."/>
            <person name="DasSarma S."/>
        </authorList>
    </citation>
    <scope>NUCLEOTIDE SEQUENCE [LARGE SCALE GENOMIC DNA]</scope>
    <source>
        <strain>ATCC 700922 / JCM 11081 / NRC-1</strain>
    </source>
</reference>
<protein>
    <recommendedName>
        <fullName evidence="1">Small ribosomal subunit protein uS17</fullName>
    </recommendedName>
    <alternativeName>
        <fullName evidence="2">30S ribosomal protein S17</fullName>
    </alternativeName>
    <alternativeName>
        <fullName>HHAS17</fullName>
    </alternativeName>
</protein>
<organism>
    <name type="scientific">Halobacterium salinarum (strain ATCC 700922 / JCM 11081 / NRC-1)</name>
    <name type="common">Halobacterium halobium</name>
    <dbReference type="NCBI Taxonomy" id="64091"/>
    <lineage>
        <taxon>Archaea</taxon>
        <taxon>Methanobacteriati</taxon>
        <taxon>Methanobacteriota</taxon>
        <taxon>Stenosarchaea group</taxon>
        <taxon>Halobacteria</taxon>
        <taxon>Halobacteriales</taxon>
        <taxon>Halobacteriaceae</taxon>
        <taxon>Halobacterium</taxon>
        <taxon>Halobacterium salinarum NRC-34001</taxon>
    </lineage>
</organism>
<accession>O24786</accession>
<accession>Q9HPC5</accession>
<evidence type="ECO:0000255" key="1">
    <source>
        <dbReference type="HAMAP-Rule" id="MF_01345"/>
    </source>
</evidence>
<evidence type="ECO:0000305" key="2"/>
<name>RS17_HALSA</name>
<proteinExistence type="inferred from homology"/>
<feature type="chain" id="PRO_0000128498" description="Small ribosomal subunit protein uS17">
    <location>
        <begin position="1"/>
        <end position="109"/>
    </location>
</feature>
<keyword id="KW-1185">Reference proteome</keyword>
<keyword id="KW-0687">Ribonucleoprotein</keyword>
<keyword id="KW-0689">Ribosomal protein</keyword>
<keyword id="KW-0694">RNA-binding</keyword>
<keyword id="KW-0699">rRNA-binding</keyword>
<dbReference type="EMBL" id="AB006961">
    <property type="protein sequence ID" value="BAA22279.1"/>
    <property type="molecule type" value="Genomic_DNA"/>
</dbReference>
<dbReference type="EMBL" id="AE004437">
    <property type="protein sequence ID" value="AAG19945.1"/>
    <property type="molecule type" value="Genomic_DNA"/>
</dbReference>
<dbReference type="PIR" id="E84322">
    <property type="entry name" value="E84322"/>
</dbReference>
<dbReference type="PIR" id="T43825">
    <property type="entry name" value="T43825"/>
</dbReference>
<dbReference type="RefSeq" id="WP_010903243.1">
    <property type="nucleotide sequence ID" value="NC_002607.1"/>
</dbReference>
<dbReference type="SMR" id="O24786"/>
<dbReference type="FunCoup" id="O24786">
    <property type="interactions" value="129"/>
</dbReference>
<dbReference type="STRING" id="64091.VNG_1700G"/>
<dbReference type="PaxDb" id="64091-VNG_1700G"/>
<dbReference type="KEGG" id="hal:VNG_1700G"/>
<dbReference type="PATRIC" id="fig|64091.14.peg.1297"/>
<dbReference type="HOGENOM" id="CLU_073626_0_3_2"/>
<dbReference type="InParanoid" id="O24786"/>
<dbReference type="OrthoDB" id="10698at2157"/>
<dbReference type="PhylomeDB" id="O24786"/>
<dbReference type="Proteomes" id="UP000000554">
    <property type="component" value="Chromosome"/>
</dbReference>
<dbReference type="GO" id="GO:0022627">
    <property type="term" value="C:cytosolic small ribosomal subunit"/>
    <property type="evidence" value="ECO:0000318"/>
    <property type="project" value="GO_Central"/>
</dbReference>
<dbReference type="GO" id="GO:0019843">
    <property type="term" value="F:rRNA binding"/>
    <property type="evidence" value="ECO:0007669"/>
    <property type="project" value="UniProtKB-UniRule"/>
</dbReference>
<dbReference type="GO" id="GO:0003735">
    <property type="term" value="F:structural constituent of ribosome"/>
    <property type="evidence" value="ECO:0000318"/>
    <property type="project" value="GO_Central"/>
</dbReference>
<dbReference type="GO" id="GO:0006412">
    <property type="term" value="P:translation"/>
    <property type="evidence" value="ECO:0007669"/>
    <property type="project" value="UniProtKB-UniRule"/>
</dbReference>
<dbReference type="CDD" id="cd00364">
    <property type="entry name" value="Ribosomal_uS17"/>
    <property type="match status" value="1"/>
</dbReference>
<dbReference type="FunFam" id="2.40.50.1000:FF:000005">
    <property type="entry name" value="30S ribosomal protein S17"/>
    <property type="match status" value="1"/>
</dbReference>
<dbReference type="Gene3D" id="2.40.50.1000">
    <property type="match status" value="1"/>
</dbReference>
<dbReference type="HAMAP" id="MF_01345_A">
    <property type="entry name" value="Ribosomal_uS17_A"/>
    <property type="match status" value="1"/>
</dbReference>
<dbReference type="InterPro" id="IPR012340">
    <property type="entry name" value="NA-bd_OB-fold"/>
</dbReference>
<dbReference type="InterPro" id="IPR000266">
    <property type="entry name" value="Ribosomal_uS17"/>
</dbReference>
<dbReference type="InterPro" id="IPR028333">
    <property type="entry name" value="Ribosomal_uS17_arc/euk"/>
</dbReference>
<dbReference type="InterPro" id="IPR019978">
    <property type="entry name" value="Ribosomal_uS17_archaeal"/>
</dbReference>
<dbReference type="InterPro" id="IPR019979">
    <property type="entry name" value="Ribosomal_uS17_CS"/>
</dbReference>
<dbReference type="NCBIfam" id="NF006345">
    <property type="entry name" value="PRK08572.1"/>
    <property type="match status" value="1"/>
</dbReference>
<dbReference type="NCBIfam" id="TIGR03630">
    <property type="entry name" value="uS17_arch"/>
    <property type="match status" value="1"/>
</dbReference>
<dbReference type="PANTHER" id="PTHR10744">
    <property type="entry name" value="40S RIBOSOMAL PROTEIN S11 FAMILY MEMBER"/>
    <property type="match status" value="1"/>
</dbReference>
<dbReference type="PANTHER" id="PTHR10744:SF9">
    <property type="entry name" value="40S RIBOSOMAL PROTEIN S11-RELATED"/>
    <property type="match status" value="1"/>
</dbReference>
<dbReference type="Pfam" id="PF00366">
    <property type="entry name" value="Ribosomal_S17"/>
    <property type="match status" value="1"/>
</dbReference>
<dbReference type="PRINTS" id="PR00973">
    <property type="entry name" value="RIBOSOMALS17"/>
</dbReference>
<dbReference type="SUPFAM" id="SSF50249">
    <property type="entry name" value="Nucleic acid-binding proteins"/>
    <property type="match status" value="1"/>
</dbReference>
<dbReference type="PROSITE" id="PS00056">
    <property type="entry name" value="RIBOSOMAL_S17"/>
    <property type="match status" value="1"/>
</dbReference>
<gene>
    <name evidence="1" type="primary">rps17</name>
    <name type="ordered locus">VNG_1700G</name>
</gene>
<comment type="function">
    <text evidence="1">One of the primary rRNA binding proteins, it binds specifically to the 5'-end of 16S ribosomal RNA.</text>
</comment>
<comment type="subunit">
    <text evidence="1">Part of the 30S ribosomal subunit.</text>
</comment>
<comment type="similarity">
    <text evidence="1">Belongs to the universal ribosomal protein uS17 family.</text>
</comment>
<sequence>MAIGLNVTEPEGTCSDEDCPFHGNLSVRGQVLEGEVASTDMEKTVVVEREYDVFVPKYDRYMKRRSRVPAHAPECFDISVGDTVSIAETRPLSKTKSHVVVEITDGGDA</sequence>